<protein>
    <recommendedName>
        <fullName>Mitochondrial import inner membrane translocase subunit tim10</fullName>
    </recommendedName>
</protein>
<evidence type="ECO:0000250" key="1"/>
<evidence type="ECO:0000305" key="2"/>
<proteinExistence type="inferred from homology"/>
<organism>
    <name type="scientific">Schizosaccharomyces pombe (strain 972 / ATCC 24843)</name>
    <name type="common">Fission yeast</name>
    <dbReference type="NCBI Taxonomy" id="284812"/>
    <lineage>
        <taxon>Eukaryota</taxon>
        <taxon>Fungi</taxon>
        <taxon>Dikarya</taxon>
        <taxon>Ascomycota</taxon>
        <taxon>Taphrinomycotina</taxon>
        <taxon>Schizosaccharomycetes</taxon>
        <taxon>Schizosaccharomycetales</taxon>
        <taxon>Schizosaccharomycetaceae</taxon>
        <taxon>Schizosaccharomyces</taxon>
    </lineage>
</organism>
<name>TIM10_SCHPO</name>
<feature type="chain" id="PRO_0000193621" description="Mitochondrial import inner membrane translocase subunit tim10">
    <location>
        <begin position="1"/>
        <end position="89"/>
    </location>
</feature>
<feature type="short sequence motif" description="Twin CX3C motif">
    <location>
        <begin position="39"/>
        <end position="64"/>
    </location>
</feature>
<feature type="disulfide bond" evidence="1">
    <location>
        <begin position="39"/>
        <end position="64"/>
    </location>
</feature>
<feature type="disulfide bond" evidence="1">
    <location>
        <begin position="43"/>
        <end position="60"/>
    </location>
</feature>
<keyword id="KW-0143">Chaperone</keyword>
<keyword id="KW-1015">Disulfide bond</keyword>
<keyword id="KW-0472">Membrane</keyword>
<keyword id="KW-0479">Metal-binding</keyword>
<keyword id="KW-0496">Mitochondrion</keyword>
<keyword id="KW-0999">Mitochondrion inner membrane</keyword>
<keyword id="KW-0653">Protein transport</keyword>
<keyword id="KW-1185">Reference proteome</keyword>
<keyword id="KW-0811">Translocation</keyword>
<keyword id="KW-0813">Transport</keyword>
<keyword id="KW-0862">Zinc</keyword>
<reference key="1">
    <citation type="journal article" date="2002" name="Nature">
        <title>The genome sequence of Schizosaccharomyces pombe.</title>
        <authorList>
            <person name="Wood V."/>
            <person name="Gwilliam R."/>
            <person name="Rajandream M.A."/>
            <person name="Lyne M.H."/>
            <person name="Lyne R."/>
            <person name="Stewart A."/>
            <person name="Sgouros J.G."/>
            <person name="Peat N."/>
            <person name="Hayles J."/>
            <person name="Baker S.G."/>
            <person name="Basham D."/>
            <person name="Bowman S."/>
            <person name="Brooks K."/>
            <person name="Brown D."/>
            <person name="Brown S."/>
            <person name="Chillingworth T."/>
            <person name="Churcher C.M."/>
            <person name="Collins M."/>
            <person name="Connor R."/>
            <person name="Cronin A."/>
            <person name="Davis P."/>
            <person name="Feltwell T."/>
            <person name="Fraser A."/>
            <person name="Gentles S."/>
            <person name="Goble A."/>
            <person name="Hamlin N."/>
            <person name="Harris D.E."/>
            <person name="Hidalgo J."/>
            <person name="Hodgson G."/>
            <person name="Holroyd S."/>
            <person name="Hornsby T."/>
            <person name="Howarth S."/>
            <person name="Huckle E.J."/>
            <person name="Hunt S."/>
            <person name="Jagels K."/>
            <person name="James K.D."/>
            <person name="Jones L."/>
            <person name="Jones M."/>
            <person name="Leather S."/>
            <person name="McDonald S."/>
            <person name="McLean J."/>
            <person name="Mooney P."/>
            <person name="Moule S."/>
            <person name="Mungall K.L."/>
            <person name="Murphy L.D."/>
            <person name="Niblett D."/>
            <person name="Odell C."/>
            <person name="Oliver K."/>
            <person name="O'Neil S."/>
            <person name="Pearson D."/>
            <person name="Quail M.A."/>
            <person name="Rabbinowitsch E."/>
            <person name="Rutherford K.M."/>
            <person name="Rutter S."/>
            <person name="Saunders D."/>
            <person name="Seeger K."/>
            <person name="Sharp S."/>
            <person name="Skelton J."/>
            <person name="Simmonds M.N."/>
            <person name="Squares R."/>
            <person name="Squares S."/>
            <person name="Stevens K."/>
            <person name="Taylor K."/>
            <person name="Taylor R.G."/>
            <person name="Tivey A."/>
            <person name="Walsh S.V."/>
            <person name="Warren T."/>
            <person name="Whitehead S."/>
            <person name="Woodward J.R."/>
            <person name="Volckaert G."/>
            <person name="Aert R."/>
            <person name="Robben J."/>
            <person name="Grymonprez B."/>
            <person name="Weltjens I."/>
            <person name="Vanstreels E."/>
            <person name="Rieger M."/>
            <person name="Schaefer M."/>
            <person name="Mueller-Auer S."/>
            <person name="Gabel C."/>
            <person name="Fuchs M."/>
            <person name="Duesterhoeft A."/>
            <person name="Fritzc C."/>
            <person name="Holzer E."/>
            <person name="Moestl D."/>
            <person name="Hilbert H."/>
            <person name="Borzym K."/>
            <person name="Langer I."/>
            <person name="Beck A."/>
            <person name="Lehrach H."/>
            <person name="Reinhardt R."/>
            <person name="Pohl T.M."/>
            <person name="Eger P."/>
            <person name="Zimmermann W."/>
            <person name="Wedler H."/>
            <person name="Wambutt R."/>
            <person name="Purnelle B."/>
            <person name="Goffeau A."/>
            <person name="Cadieu E."/>
            <person name="Dreano S."/>
            <person name="Gloux S."/>
            <person name="Lelaure V."/>
            <person name="Mottier S."/>
            <person name="Galibert F."/>
            <person name="Aves S.J."/>
            <person name="Xiang Z."/>
            <person name="Hunt C."/>
            <person name="Moore K."/>
            <person name="Hurst S.M."/>
            <person name="Lucas M."/>
            <person name="Rochet M."/>
            <person name="Gaillardin C."/>
            <person name="Tallada V.A."/>
            <person name="Garzon A."/>
            <person name="Thode G."/>
            <person name="Daga R.R."/>
            <person name="Cruzado L."/>
            <person name="Jimenez J."/>
            <person name="Sanchez M."/>
            <person name="del Rey F."/>
            <person name="Benito J."/>
            <person name="Dominguez A."/>
            <person name="Revuelta J.L."/>
            <person name="Moreno S."/>
            <person name="Armstrong J."/>
            <person name="Forsburg S.L."/>
            <person name="Cerutti L."/>
            <person name="Lowe T."/>
            <person name="McCombie W.R."/>
            <person name="Paulsen I."/>
            <person name="Potashkin J."/>
            <person name="Shpakovski G.V."/>
            <person name="Ussery D."/>
            <person name="Barrell B.G."/>
            <person name="Nurse P."/>
        </authorList>
    </citation>
    <scope>NUCLEOTIDE SEQUENCE [LARGE SCALE GENOMIC DNA]</scope>
    <source>
        <strain>972 / ATCC 24843</strain>
    </source>
</reference>
<comment type="function">
    <text evidence="1">Mitochondrial intermembrane chaperone that participates in the import and insertion of multi-pass transmembrane proteins into the mitochondrial inner membrane. Also required for the transfer of beta-barrel precursors from the TOM complex to the sorting and assembly machinery (SAM complex) of the outer membrane. Acts as a chaperone-like protein that protects the hydrophobic precursors from aggregation and guide them through the mitochondrial intermembrane space (By similarity).</text>
</comment>
<comment type="subunit">
    <text evidence="1">Heterohexamer; composed of 3 copies of TIM9 and 3 copies of TIM10, named soluble 70 kDa complex. Associates directly with the TIM22 complex, whose core is composed of TIM22 and TIM54. Interacts with the transmembrane regions of multi-pass transmembrane proteins in transit (By similarity).</text>
</comment>
<comment type="subcellular location">
    <subcellularLocation>
        <location evidence="1">Mitochondrion inner membrane</location>
        <topology evidence="1">Peripheral membrane protein</topology>
        <orientation evidence="1">Intermembrane side</orientation>
    </subcellularLocation>
</comment>
<comment type="domain">
    <text evidence="1">The twin CX3C motif contains 4 conserved Cys residues that form 2 disulfide bonds in the mitochondrial intermembrane space. However, during the transit of TIM10 from cytoplasm into mitochondrion, the Cys residues probably coordinate zinc, thereby preventing folding and allowing its transfer across mitochondrial outer membrane (By similarity).</text>
</comment>
<comment type="similarity">
    <text evidence="2">Belongs to the small Tim family.</text>
</comment>
<dbReference type="EMBL" id="CU329670">
    <property type="protein sequence ID" value="CAB60695.1"/>
    <property type="molecule type" value="Genomic_DNA"/>
</dbReference>
<dbReference type="PIR" id="T50144">
    <property type="entry name" value="T50144"/>
</dbReference>
<dbReference type="RefSeq" id="NP_593142.1">
    <property type="nucleotide sequence ID" value="NM_001018539.2"/>
</dbReference>
<dbReference type="SMR" id="Q9UTE9"/>
<dbReference type="BioGRID" id="278437">
    <property type="interactions" value="2"/>
</dbReference>
<dbReference type="FunCoup" id="Q9UTE9">
    <property type="interactions" value="360"/>
</dbReference>
<dbReference type="STRING" id="284812.Q9UTE9"/>
<dbReference type="iPTMnet" id="Q9UTE9"/>
<dbReference type="PaxDb" id="4896-SPAC222.03c.1"/>
<dbReference type="EnsemblFungi" id="SPAC222.03c.1">
    <property type="protein sequence ID" value="SPAC222.03c.1:pep"/>
    <property type="gene ID" value="SPAC222.03c"/>
</dbReference>
<dbReference type="GeneID" id="2541950"/>
<dbReference type="KEGG" id="spo:2541950"/>
<dbReference type="PomBase" id="SPAC222.03c">
    <property type="gene designation" value="tim10"/>
</dbReference>
<dbReference type="VEuPathDB" id="FungiDB:SPAC222.03c"/>
<dbReference type="eggNOG" id="KOG3480">
    <property type="taxonomic scope" value="Eukaryota"/>
</dbReference>
<dbReference type="HOGENOM" id="CLU_162151_1_0_1"/>
<dbReference type="InParanoid" id="Q9UTE9"/>
<dbReference type="OMA" id="VGENMQK"/>
<dbReference type="PhylomeDB" id="Q9UTE9"/>
<dbReference type="Reactome" id="R-SPO-1268020">
    <property type="pathway name" value="Mitochondrial protein import"/>
</dbReference>
<dbReference type="PRO" id="PR:Q9UTE9"/>
<dbReference type="Proteomes" id="UP000002485">
    <property type="component" value="Chromosome I"/>
</dbReference>
<dbReference type="GO" id="GO:0005743">
    <property type="term" value="C:mitochondrial inner membrane"/>
    <property type="evidence" value="ECO:0000318"/>
    <property type="project" value="GO_Central"/>
</dbReference>
<dbReference type="GO" id="GO:0042719">
    <property type="term" value="C:mitochondrial intermembrane space protein transporter complex"/>
    <property type="evidence" value="ECO:0000266"/>
    <property type="project" value="PomBase"/>
</dbReference>
<dbReference type="GO" id="GO:0046872">
    <property type="term" value="F:metal ion binding"/>
    <property type="evidence" value="ECO:0007669"/>
    <property type="project" value="UniProtKB-KW"/>
</dbReference>
<dbReference type="GO" id="GO:0045039">
    <property type="term" value="P:protein insertion into mitochondrial inner membrane"/>
    <property type="evidence" value="ECO:0000318"/>
    <property type="project" value="GO_Central"/>
</dbReference>
<dbReference type="FunFam" id="1.10.287.810:FF:000002">
    <property type="entry name" value="Mitochondrial import inner membrane translocase subunit tim10"/>
    <property type="match status" value="1"/>
</dbReference>
<dbReference type="Gene3D" id="1.10.287.810">
    <property type="entry name" value="Mitochondrial import inner membrane translocase subunit tim13 like domains"/>
    <property type="match status" value="1"/>
</dbReference>
<dbReference type="InterPro" id="IPR004217">
    <property type="entry name" value="Tim10-like"/>
</dbReference>
<dbReference type="InterPro" id="IPR035427">
    <property type="entry name" value="Tim10-like_dom_sf"/>
</dbReference>
<dbReference type="PANTHER" id="PTHR11038">
    <property type="entry name" value="MITOCHONDRIAL IMPORT INNER MEMBRANE TRANSLOCASE SUBUNIT TIM10"/>
    <property type="match status" value="1"/>
</dbReference>
<dbReference type="PANTHER" id="PTHR11038:SF16">
    <property type="entry name" value="MITOCHONDRIAL IMPORT INNER MEMBRANE TRANSLOCASE SUBUNIT TIM10"/>
    <property type="match status" value="1"/>
</dbReference>
<dbReference type="Pfam" id="PF02953">
    <property type="entry name" value="zf-Tim10_DDP"/>
    <property type="match status" value="1"/>
</dbReference>
<dbReference type="SUPFAM" id="SSF144122">
    <property type="entry name" value="Tim10-like"/>
    <property type="match status" value="1"/>
</dbReference>
<accession>Q9UTE9</accession>
<sequence>MSMFGIGKNNQTINPQNIAMAEQEVEMMSDIFNRLVMTCHKKCISPKYYEADLTKGESVCIDRCVSKYFEANQSLSQHMQKRGQENPTP</sequence>
<gene>
    <name type="primary">tim10</name>
    <name type="ORF">SPAC222.03c</name>
</gene>